<gene>
    <name evidence="1" type="primary">rplC</name>
    <name type="ordered locus">Lcho_3999</name>
</gene>
<organism>
    <name type="scientific">Leptothrix cholodnii (strain ATCC 51168 / LMG 8142 / SP-6)</name>
    <name type="common">Leptothrix discophora (strain SP-6)</name>
    <dbReference type="NCBI Taxonomy" id="395495"/>
    <lineage>
        <taxon>Bacteria</taxon>
        <taxon>Pseudomonadati</taxon>
        <taxon>Pseudomonadota</taxon>
        <taxon>Betaproteobacteria</taxon>
        <taxon>Burkholderiales</taxon>
        <taxon>Sphaerotilaceae</taxon>
        <taxon>Leptothrix</taxon>
    </lineage>
</organism>
<dbReference type="EMBL" id="CP001013">
    <property type="protein sequence ID" value="ACB36253.1"/>
    <property type="molecule type" value="Genomic_DNA"/>
</dbReference>
<dbReference type="RefSeq" id="WP_012348998.1">
    <property type="nucleotide sequence ID" value="NC_010524.1"/>
</dbReference>
<dbReference type="SMR" id="B1Y8I7"/>
<dbReference type="STRING" id="395495.Lcho_3999"/>
<dbReference type="KEGG" id="lch:Lcho_3999"/>
<dbReference type="eggNOG" id="COG0087">
    <property type="taxonomic scope" value="Bacteria"/>
</dbReference>
<dbReference type="HOGENOM" id="CLU_044142_4_1_4"/>
<dbReference type="OrthoDB" id="9806135at2"/>
<dbReference type="Proteomes" id="UP000001693">
    <property type="component" value="Chromosome"/>
</dbReference>
<dbReference type="GO" id="GO:0022625">
    <property type="term" value="C:cytosolic large ribosomal subunit"/>
    <property type="evidence" value="ECO:0007669"/>
    <property type="project" value="TreeGrafter"/>
</dbReference>
<dbReference type="GO" id="GO:0019843">
    <property type="term" value="F:rRNA binding"/>
    <property type="evidence" value="ECO:0007669"/>
    <property type="project" value="UniProtKB-UniRule"/>
</dbReference>
<dbReference type="GO" id="GO:0003735">
    <property type="term" value="F:structural constituent of ribosome"/>
    <property type="evidence" value="ECO:0007669"/>
    <property type="project" value="InterPro"/>
</dbReference>
<dbReference type="GO" id="GO:0006412">
    <property type="term" value="P:translation"/>
    <property type="evidence" value="ECO:0007669"/>
    <property type="project" value="UniProtKB-UniRule"/>
</dbReference>
<dbReference type="FunFam" id="2.40.30.10:FF:000004">
    <property type="entry name" value="50S ribosomal protein L3"/>
    <property type="match status" value="1"/>
</dbReference>
<dbReference type="FunFam" id="3.30.160.810:FF:000001">
    <property type="entry name" value="50S ribosomal protein L3"/>
    <property type="match status" value="1"/>
</dbReference>
<dbReference type="Gene3D" id="3.30.160.810">
    <property type="match status" value="1"/>
</dbReference>
<dbReference type="Gene3D" id="2.40.30.10">
    <property type="entry name" value="Translation factors"/>
    <property type="match status" value="1"/>
</dbReference>
<dbReference type="HAMAP" id="MF_01325_B">
    <property type="entry name" value="Ribosomal_uL3_B"/>
    <property type="match status" value="1"/>
</dbReference>
<dbReference type="InterPro" id="IPR000597">
    <property type="entry name" value="Ribosomal_uL3"/>
</dbReference>
<dbReference type="InterPro" id="IPR019927">
    <property type="entry name" value="Ribosomal_uL3_bac/org-type"/>
</dbReference>
<dbReference type="InterPro" id="IPR019926">
    <property type="entry name" value="Ribosomal_uL3_CS"/>
</dbReference>
<dbReference type="InterPro" id="IPR009000">
    <property type="entry name" value="Transl_B-barrel_sf"/>
</dbReference>
<dbReference type="NCBIfam" id="TIGR03625">
    <property type="entry name" value="L3_bact"/>
    <property type="match status" value="1"/>
</dbReference>
<dbReference type="PANTHER" id="PTHR11229">
    <property type="entry name" value="50S RIBOSOMAL PROTEIN L3"/>
    <property type="match status" value="1"/>
</dbReference>
<dbReference type="PANTHER" id="PTHR11229:SF16">
    <property type="entry name" value="LARGE RIBOSOMAL SUBUNIT PROTEIN UL3C"/>
    <property type="match status" value="1"/>
</dbReference>
<dbReference type="Pfam" id="PF00297">
    <property type="entry name" value="Ribosomal_L3"/>
    <property type="match status" value="1"/>
</dbReference>
<dbReference type="SUPFAM" id="SSF50447">
    <property type="entry name" value="Translation proteins"/>
    <property type="match status" value="1"/>
</dbReference>
<dbReference type="PROSITE" id="PS00474">
    <property type="entry name" value="RIBOSOMAL_L3"/>
    <property type="match status" value="1"/>
</dbReference>
<evidence type="ECO:0000255" key="1">
    <source>
        <dbReference type="HAMAP-Rule" id="MF_01325"/>
    </source>
</evidence>
<evidence type="ECO:0000305" key="2"/>
<reference key="1">
    <citation type="submission" date="2008-03" db="EMBL/GenBank/DDBJ databases">
        <title>Complete sequence of Leptothrix cholodnii SP-6.</title>
        <authorList>
            <consortium name="US DOE Joint Genome Institute"/>
            <person name="Copeland A."/>
            <person name="Lucas S."/>
            <person name="Lapidus A."/>
            <person name="Glavina del Rio T."/>
            <person name="Dalin E."/>
            <person name="Tice H."/>
            <person name="Bruce D."/>
            <person name="Goodwin L."/>
            <person name="Pitluck S."/>
            <person name="Chertkov O."/>
            <person name="Brettin T."/>
            <person name="Detter J.C."/>
            <person name="Han C."/>
            <person name="Kuske C.R."/>
            <person name="Schmutz J."/>
            <person name="Larimer F."/>
            <person name="Land M."/>
            <person name="Hauser L."/>
            <person name="Kyrpides N."/>
            <person name="Lykidis A."/>
            <person name="Emerson D."/>
            <person name="Richardson P."/>
        </authorList>
    </citation>
    <scope>NUCLEOTIDE SEQUENCE [LARGE SCALE GENOMIC DNA]</scope>
    <source>
        <strain>ATCC 51168 / LMG 8142 / SP-6</strain>
    </source>
</reference>
<proteinExistence type="inferred from homology"/>
<comment type="function">
    <text evidence="1">One of the primary rRNA binding proteins, it binds directly near the 3'-end of the 23S rRNA, where it nucleates assembly of the 50S subunit.</text>
</comment>
<comment type="subunit">
    <text evidence="1">Part of the 50S ribosomal subunit. Forms a cluster with proteins L14 and L19.</text>
</comment>
<comment type="PTM">
    <text evidence="1">Methylated by PrmB.</text>
</comment>
<comment type="similarity">
    <text evidence="1">Belongs to the universal ribosomal protein uL3 family.</text>
</comment>
<sequence length="226" mass="23789">MTTPNPGQRLGLLGRKVGMMRIFTDDGDAVPVTVLDVSNNRVAQIKTVETDGYSAVQVAFGARKASRVTKPEAGHLAKAGVESGELLQEFRVSAEVAAECKPGSQLPIAMFQAGQQVDVQGTTIGKGFAGTIKRHHFGSQRASHGNSRSHNVPGSISMAQDPGRVFPGKKMSGHLGDDTVTTQNLDVVRVDEARQLLLVKGAVPGAKGGFVTVRPAVKVKLKKGAN</sequence>
<accession>B1Y8I7</accession>
<keyword id="KW-0488">Methylation</keyword>
<keyword id="KW-1185">Reference proteome</keyword>
<keyword id="KW-0687">Ribonucleoprotein</keyword>
<keyword id="KW-0689">Ribosomal protein</keyword>
<keyword id="KW-0694">RNA-binding</keyword>
<keyword id="KW-0699">rRNA-binding</keyword>
<protein>
    <recommendedName>
        <fullName evidence="1">Large ribosomal subunit protein uL3</fullName>
    </recommendedName>
    <alternativeName>
        <fullName evidence="2">50S ribosomal protein L3</fullName>
    </alternativeName>
</protein>
<feature type="chain" id="PRO_0000353611" description="Large ribosomal subunit protein uL3">
    <location>
        <begin position="1"/>
        <end position="226"/>
    </location>
</feature>
<feature type="modified residue" description="N5-methylglutamine" evidence="1">
    <location>
        <position position="160"/>
    </location>
</feature>
<name>RL3_LEPCP</name>